<keyword id="KW-0963">Cytoplasm</keyword>
<keyword id="KW-0444">Lipid biosynthesis</keyword>
<keyword id="KW-0443">Lipid metabolism</keyword>
<keyword id="KW-0594">Phospholipid biosynthesis</keyword>
<keyword id="KW-1208">Phospholipid metabolism</keyword>
<keyword id="KW-1185">Reference proteome</keyword>
<keyword id="KW-0808">Transferase</keyword>
<sequence>MRIALDASGGDFGYQPNILGAARAVKELKCEVILVGDEKVLKEQLASLGLSDLKGLSVEHAPDVIDMDADPAKEVRSKKNASVVVAADLVKQGRAKAFVSAGNSGATMVAALMKMGRIEGVLRPAIGAPLPTVKGLMLLLDAGANAECKPQHLMQFAVMGSIYTQKVFGIRKPKVGLLSIGEEEGKGNDLVKETYPYLSNLGINFCGNVEGRDLPFGTTDVVVTDGFTGNVCLKLEEGLAKAMFHMIKGEIKKNPIAMLGAMLAKPAFASVKKITDPDTAGGAPLLGVDGVAIVSHGKSSETAVFNAVRTAKRLVDSGFVSDIKQHIAEYKEIFEKLEAKK</sequence>
<comment type="function">
    <text evidence="1">Catalyzes the reversible formation of acyl-phosphate (acyl-PO(4)) from acyl-[acyl-carrier-protein] (acyl-ACP). This enzyme utilizes acyl-ACP as fatty acyl donor, but not acyl-CoA.</text>
</comment>
<comment type="catalytic activity">
    <reaction evidence="1">
        <text>a fatty acyl-[ACP] + phosphate = an acyl phosphate + holo-[ACP]</text>
        <dbReference type="Rhea" id="RHEA:42292"/>
        <dbReference type="Rhea" id="RHEA-COMP:9685"/>
        <dbReference type="Rhea" id="RHEA-COMP:14125"/>
        <dbReference type="ChEBI" id="CHEBI:43474"/>
        <dbReference type="ChEBI" id="CHEBI:59918"/>
        <dbReference type="ChEBI" id="CHEBI:64479"/>
        <dbReference type="ChEBI" id="CHEBI:138651"/>
        <dbReference type="EC" id="2.3.1.274"/>
    </reaction>
</comment>
<comment type="pathway">
    <text evidence="1">Lipid metabolism; phospholipid metabolism.</text>
</comment>
<comment type="subunit">
    <text evidence="1">Homodimer. Probably interacts with PlsY.</text>
</comment>
<comment type="subcellular location">
    <subcellularLocation>
        <location evidence="1">Cytoplasm</location>
    </subcellularLocation>
    <text evidence="1">Associated with the membrane possibly through PlsY.</text>
</comment>
<comment type="similarity">
    <text evidence="1">Belongs to the PlsX family.</text>
</comment>
<organism>
    <name type="scientific">Elusimicrobium minutum (strain Pei191)</name>
    <dbReference type="NCBI Taxonomy" id="445932"/>
    <lineage>
        <taxon>Bacteria</taxon>
        <taxon>Pseudomonadati</taxon>
        <taxon>Elusimicrobiota</taxon>
        <taxon>Elusimicrobia</taxon>
        <taxon>Elusimicrobiales</taxon>
        <taxon>Elusimicrobiaceae</taxon>
        <taxon>Elusimicrobium</taxon>
    </lineage>
</organism>
<name>PLSX_ELUMP</name>
<dbReference type="EC" id="2.3.1.274" evidence="1"/>
<dbReference type="EMBL" id="CP001055">
    <property type="protein sequence ID" value="ACC98213.1"/>
    <property type="molecule type" value="Genomic_DNA"/>
</dbReference>
<dbReference type="RefSeq" id="WP_012414828.1">
    <property type="nucleotide sequence ID" value="NC_010644.1"/>
</dbReference>
<dbReference type="SMR" id="B2KC86"/>
<dbReference type="STRING" id="445932.Emin_0658"/>
<dbReference type="KEGG" id="emi:Emin_0658"/>
<dbReference type="HOGENOM" id="CLU_039379_1_1_0"/>
<dbReference type="OrthoDB" id="9806408at2"/>
<dbReference type="UniPathway" id="UPA00085"/>
<dbReference type="Proteomes" id="UP000001029">
    <property type="component" value="Chromosome"/>
</dbReference>
<dbReference type="GO" id="GO:0005737">
    <property type="term" value="C:cytoplasm"/>
    <property type="evidence" value="ECO:0007669"/>
    <property type="project" value="UniProtKB-SubCell"/>
</dbReference>
<dbReference type="GO" id="GO:0043811">
    <property type="term" value="F:phosphate:acyl-[acyl carrier protein] acyltransferase activity"/>
    <property type="evidence" value="ECO:0007669"/>
    <property type="project" value="UniProtKB-UniRule"/>
</dbReference>
<dbReference type="GO" id="GO:0006633">
    <property type="term" value="P:fatty acid biosynthetic process"/>
    <property type="evidence" value="ECO:0007669"/>
    <property type="project" value="UniProtKB-UniRule"/>
</dbReference>
<dbReference type="GO" id="GO:0008654">
    <property type="term" value="P:phospholipid biosynthetic process"/>
    <property type="evidence" value="ECO:0007669"/>
    <property type="project" value="UniProtKB-KW"/>
</dbReference>
<dbReference type="Gene3D" id="3.40.718.10">
    <property type="entry name" value="Isopropylmalate Dehydrogenase"/>
    <property type="match status" value="1"/>
</dbReference>
<dbReference type="HAMAP" id="MF_00019">
    <property type="entry name" value="PlsX"/>
    <property type="match status" value="1"/>
</dbReference>
<dbReference type="InterPro" id="IPR003664">
    <property type="entry name" value="FA_synthesis"/>
</dbReference>
<dbReference type="InterPro" id="IPR012281">
    <property type="entry name" value="Phospholipid_synth_PlsX-like"/>
</dbReference>
<dbReference type="NCBIfam" id="TIGR00182">
    <property type="entry name" value="plsX"/>
    <property type="match status" value="1"/>
</dbReference>
<dbReference type="PANTHER" id="PTHR30100">
    <property type="entry name" value="FATTY ACID/PHOSPHOLIPID SYNTHESIS PROTEIN PLSX"/>
    <property type="match status" value="1"/>
</dbReference>
<dbReference type="PANTHER" id="PTHR30100:SF1">
    <property type="entry name" value="PHOSPHATE ACYLTRANSFERASE"/>
    <property type="match status" value="1"/>
</dbReference>
<dbReference type="Pfam" id="PF02504">
    <property type="entry name" value="FA_synthesis"/>
    <property type="match status" value="1"/>
</dbReference>
<dbReference type="PIRSF" id="PIRSF002465">
    <property type="entry name" value="Phsphlp_syn_PlsX"/>
    <property type="match status" value="1"/>
</dbReference>
<dbReference type="SUPFAM" id="SSF53659">
    <property type="entry name" value="Isocitrate/Isopropylmalate dehydrogenase-like"/>
    <property type="match status" value="1"/>
</dbReference>
<proteinExistence type="inferred from homology"/>
<protein>
    <recommendedName>
        <fullName evidence="1">Phosphate acyltransferase</fullName>
        <ecNumber evidence="1">2.3.1.274</ecNumber>
    </recommendedName>
    <alternativeName>
        <fullName evidence="1">Acyl-ACP phosphotransacylase</fullName>
    </alternativeName>
    <alternativeName>
        <fullName evidence="1">Acyl-[acyl-carrier-protein]--phosphate acyltransferase</fullName>
    </alternativeName>
    <alternativeName>
        <fullName evidence="1">Phosphate-acyl-ACP acyltransferase</fullName>
    </alternativeName>
</protein>
<evidence type="ECO:0000255" key="1">
    <source>
        <dbReference type="HAMAP-Rule" id="MF_00019"/>
    </source>
</evidence>
<accession>B2KC86</accession>
<feature type="chain" id="PRO_1000089904" description="Phosphate acyltransferase">
    <location>
        <begin position="1"/>
        <end position="341"/>
    </location>
</feature>
<gene>
    <name evidence="1" type="primary">plsX</name>
    <name type="ordered locus">Emin_0658</name>
</gene>
<reference key="1">
    <citation type="journal article" date="2009" name="Appl. Environ. Microbiol.">
        <title>Genomic analysis of 'Elusimicrobium minutum,' the first cultivated representative of the phylum 'Elusimicrobia' (formerly termite group 1).</title>
        <authorList>
            <person name="Herlemann D.P.R."/>
            <person name="Geissinger O."/>
            <person name="Ikeda-Ohtsubo W."/>
            <person name="Kunin V."/>
            <person name="Sun H."/>
            <person name="Lapidus A."/>
            <person name="Hugenholtz P."/>
            <person name="Brune A."/>
        </authorList>
    </citation>
    <scope>NUCLEOTIDE SEQUENCE [LARGE SCALE GENOMIC DNA]</scope>
    <source>
        <strain>Pei191</strain>
    </source>
</reference>